<gene>
    <name evidence="1" type="primary">ilvD</name>
    <name type="ordered locus">Mthe_0673</name>
</gene>
<keyword id="KW-0001">2Fe-2S</keyword>
<keyword id="KW-0028">Amino-acid biosynthesis</keyword>
<keyword id="KW-0100">Branched-chain amino acid biosynthesis</keyword>
<keyword id="KW-0408">Iron</keyword>
<keyword id="KW-0411">Iron-sulfur</keyword>
<keyword id="KW-0456">Lyase</keyword>
<keyword id="KW-0460">Magnesium</keyword>
<keyword id="KW-0479">Metal-binding</keyword>
<keyword id="KW-1185">Reference proteome</keyword>
<comment type="function">
    <text evidence="1">Functions in the biosynthesis of branched-chain amino acids. Catalyzes the dehydration of (2R,3R)-2,3-dihydroxy-3-methylpentanoate (2,3-dihydroxy-3-methylvalerate) into 2-oxo-3-methylpentanoate (2-oxo-3-methylvalerate) and of (2R)-2,3-dihydroxy-3-methylbutanoate (2,3-dihydroxyisovalerate) into 2-oxo-3-methylbutanoate (2-oxoisovalerate), the penultimate precursor to L-isoleucine and L-valine, respectively.</text>
</comment>
<comment type="catalytic activity">
    <reaction evidence="1">
        <text>(2R)-2,3-dihydroxy-3-methylbutanoate = 3-methyl-2-oxobutanoate + H2O</text>
        <dbReference type="Rhea" id="RHEA:24809"/>
        <dbReference type="ChEBI" id="CHEBI:11851"/>
        <dbReference type="ChEBI" id="CHEBI:15377"/>
        <dbReference type="ChEBI" id="CHEBI:49072"/>
        <dbReference type="EC" id="4.2.1.9"/>
    </reaction>
    <physiologicalReaction direction="left-to-right" evidence="1">
        <dbReference type="Rhea" id="RHEA:24810"/>
    </physiologicalReaction>
</comment>
<comment type="catalytic activity">
    <reaction evidence="1">
        <text>(2R,3R)-2,3-dihydroxy-3-methylpentanoate = (S)-3-methyl-2-oxopentanoate + H2O</text>
        <dbReference type="Rhea" id="RHEA:27694"/>
        <dbReference type="ChEBI" id="CHEBI:15377"/>
        <dbReference type="ChEBI" id="CHEBI:35146"/>
        <dbReference type="ChEBI" id="CHEBI:49258"/>
        <dbReference type="EC" id="4.2.1.9"/>
    </reaction>
    <physiologicalReaction direction="left-to-right" evidence="1">
        <dbReference type="Rhea" id="RHEA:27695"/>
    </physiologicalReaction>
</comment>
<comment type="cofactor">
    <cofactor evidence="1">
        <name>[2Fe-2S] cluster</name>
        <dbReference type="ChEBI" id="CHEBI:190135"/>
    </cofactor>
    <text evidence="1">Binds 1 [2Fe-2S] cluster per subunit. This cluster acts as a Lewis acid cofactor.</text>
</comment>
<comment type="cofactor">
    <cofactor evidence="1">
        <name>Mg(2+)</name>
        <dbReference type="ChEBI" id="CHEBI:18420"/>
    </cofactor>
</comment>
<comment type="pathway">
    <text evidence="1">Amino-acid biosynthesis; L-isoleucine biosynthesis; L-isoleucine from 2-oxobutanoate: step 3/4.</text>
</comment>
<comment type="pathway">
    <text evidence="1">Amino-acid biosynthesis; L-valine biosynthesis; L-valine from pyruvate: step 3/4.</text>
</comment>
<comment type="subunit">
    <text evidence="1">Homodimer.</text>
</comment>
<comment type="similarity">
    <text evidence="1">Belongs to the IlvD/Edd family.</text>
</comment>
<feature type="chain" id="PRO_1000001012" description="Dihydroxy-acid dehydratase">
    <location>
        <begin position="1"/>
        <end position="548"/>
    </location>
</feature>
<feature type="active site" description="Proton acceptor" evidence="1">
    <location>
        <position position="464"/>
    </location>
</feature>
<feature type="binding site" evidence="1">
    <location>
        <position position="78"/>
    </location>
    <ligand>
        <name>Mg(2+)</name>
        <dbReference type="ChEBI" id="CHEBI:18420"/>
    </ligand>
</feature>
<feature type="binding site" evidence="1">
    <location>
        <position position="119"/>
    </location>
    <ligand>
        <name>[2Fe-2S] cluster</name>
        <dbReference type="ChEBI" id="CHEBI:190135"/>
    </ligand>
</feature>
<feature type="binding site" evidence="1">
    <location>
        <position position="120"/>
    </location>
    <ligand>
        <name>Mg(2+)</name>
        <dbReference type="ChEBI" id="CHEBI:18420"/>
    </ligand>
</feature>
<feature type="binding site" description="via carbamate group" evidence="1">
    <location>
        <position position="121"/>
    </location>
    <ligand>
        <name>Mg(2+)</name>
        <dbReference type="ChEBI" id="CHEBI:18420"/>
    </ligand>
</feature>
<feature type="binding site" evidence="1">
    <location>
        <position position="185"/>
    </location>
    <ligand>
        <name>[2Fe-2S] cluster</name>
        <dbReference type="ChEBI" id="CHEBI:190135"/>
    </ligand>
</feature>
<feature type="binding site" evidence="1">
    <location>
        <position position="438"/>
    </location>
    <ligand>
        <name>Mg(2+)</name>
        <dbReference type="ChEBI" id="CHEBI:18420"/>
    </ligand>
</feature>
<feature type="modified residue" description="N6-carboxylysine" evidence="1">
    <location>
        <position position="121"/>
    </location>
</feature>
<sequence>MRSDITKSGPERAPHRALLKAMGITDDEIKRPFIGVANSANEFVPGHIHLDRIAEAVKAGIRIAGGVPFEFQTIGVCDGIAMGHGGMRYSLPSREIIEDSIEIMAQAHQLDGLVLIPTCDKIVPGHLMAAGRLDLPTIVVTGGPMLPGFACDRELDLINVFEEWQKGGESLSILEDLACPGAGSCAGLFTANSMACMAEALGLSLPGCATAHAVDAKKMRIAKLSGMMIVELVKRGLTARKIVSRESFENAVRVDMAIGGSTNTALHLPAIAAEFDIDLELDVFDRLSRETPHLVNLRPGGPHHMLDLDRAGGVQAVMHRLSSKLDLSVLTVTGKTLGAVLAEFKPVNPKANAEVIATLERPVHPEGGIAILKGSLAPEGSVVKQTAVSKKMLVHKGPAVVYDSEEESMKGILSGEVKAGDVVVIRYEGPKGGPGMRETLAPTSAIAGAGLSESVALITDGRFSGGTRGPCIGHVSPEAAVGGPIALVENGDMISIDIPNRRLDLLVDEGVLERRRASWRPPEPRVRGGVLDRYRKSVTSASKGGVLR</sequence>
<protein>
    <recommendedName>
        <fullName evidence="1">Dihydroxy-acid dehydratase</fullName>
        <shortName evidence="1">DAD</shortName>
        <ecNumber evidence="1">4.2.1.9</ecNumber>
    </recommendedName>
</protein>
<organism>
    <name type="scientific">Methanothrix thermoacetophila (strain DSM 6194 / JCM 14653 / NBRC 101360 / PT)</name>
    <name type="common">Methanosaeta thermophila</name>
    <dbReference type="NCBI Taxonomy" id="349307"/>
    <lineage>
        <taxon>Archaea</taxon>
        <taxon>Methanobacteriati</taxon>
        <taxon>Methanobacteriota</taxon>
        <taxon>Stenosarchaea group</taxon>
        <taxon>Methanomicrobia</taxon>
        <taxon>Methanotrichales</taxon>
        <taxon>Methanotrichaceae</taxon>
        <taxon>Methanothrix</taxon>
    </lineage>
</organism>
<dbReference type="EC" id="4.2.1.9" evidence="1"/>
<dbReference type="EMBL" id="CP000477">
    <property type="protein sequence ID" value="ABK14463.1"/>
    <property type="molecule type" value="Genomic_DNA"/>
</dbReference>
<dbReference type="RefSeq" id="WP_011695859.1">
    <property type="nucleotide sequence ID" value="NC_008553.1"/>
</dbReference>
<dbReference type="SMR" id="A0B6Y9"/>
<dbReference type="STRING" id="349307.Mthe_0673"/>
<dbReference type="GeneID" id="4463313"/>
<dbReference type="KEGG" id="mtp:Mthe_0673"/>
<dbReference type="HOGENOM" id="CLU_014271_4_2_2"/>
<dbReference type="OrthoDB" id="8674at2157"/>
<dbReference type="UniPathway" id="UPA00047">
    <property type="reaction ID" value="UER00057"/>
</dbReference>
<dbReference type="UniPathway" id="UPA00049">
    <property type="reaction ID" value="UER00061"/>
</dbReference>
<dbReference type="Proteomes" id="UP000000674">
    <property type="component" value="Chromosome"/>
</dbReference>
<dbReference type="GO" id="GO:0005829">
    <property type="term" value="C:cytosol"/>
    <property type="evidence" value="ECO:0007669"/>
    <property type="project" value="TreeGrafter"/>
</dbReference>
<dbReference type="GO" id="GO:0051537">
    <property type="term" value="F:2 iron, 2 sulfur cluster binding"/>
    <property type="evidence" value="ECO:0007669"/>
    <property type="project" value="UniProtKB-UniRule"/>
</dbReference>
<dbReference type="GO" id="GO:0004160">
    <property type="term" value="F:dihydroxy-acid dehydratase activity"/>
    <property type="evidence" value="ECO:0007669"/>
    <property type="project" value="UniProtKB-UniRule"/>
</dbReference>
<dbReference type="GO" id="GO:0000287">
    <property type="term" value="F:magnesium ion binding"/>
    <property type="evidence" value="ECO:0007669"/>
    <property type="project" value="UniProtKB-UniRule"/>
</dbReference>
<dbReference type="GO" id="GO:0009097">
    <property type="term" value="P:isoleucine biosynthetic process"/>
    <property type="evidence" value="ECO:0007669"/>
    <property type="project" value="UniProtKB-UniRule"/>
</dbReference>
<dbReference type="GO" id="GO:0009099">
    <property type="term" value="P:L-valine biosynthetic process"/>
    <property type="evidence" value="ECO:0007669"/>
    <property type="project" value="UniProtKB-UniRule"/>
</dbReference>
<dbReference type="FunFam" id="3.50.30.80:FF:000001">
    <property type="entry name" value="Dihydroxy-acid dehydratase"/>
    <property type="match status" value="1"/>
</dbReference>
<dbReference type="Gene3D" id="3.50.30.80">
    <property type="entry name" value="IlvD/EDD C-terminal domain-like"/>
    <property type="match status" value="1"/>
</dbReference>
<dbReference type="HAMAP" id="MF_00012">
    <property type="entry name" value="IlvD"/>
    <property type="match status" value="1"/>
</dbReference>
<dbReference type="InterPro" id="IPR042096">
    <property type="entry name" value="Dihydro-acid_dehy_C"/>
</dbReference>
<dbReference type="InterPro" id="IPR004404">
    <property type="entry name" value="DihydroxyA_deHydtase"/>
</dbReference>
<dbReference type="InterPro" id="IPR020558">
    <property type="entry name" value="DiOHA_6PGluconate_deHydtase_CS"/>
</dbReference>
<dbReference type="InterPro" id="IPR056740">
    <property type="entry name" value="ILV_EDD_C"/>
</dbReference>
<dbReference type="InterPro" id="IPR000581">
    <property type="entry name" value="ILV_EDD_N"/>
</dbReference>
<dbReference type="InterPro" id="IPR037237">
    <property type="entry name" value="IlvD/EDD_N"/>
</dbReference>
<dbReference type="NCBIfam" id="TIGR00110">
    <property type="entry name" value="ilvD"/>
    <property type="match status" value="1"/>
</dbReference>
<dbReference type="NCBIfam" id="NF002068">
    <property type="entry name" value="PRK00911.1"/>
    <property type="match status" value="1"/>
</dbReference>
<dbReference type="PANTHER" id="PTHR43661">
    <property type="entry name" value="D-XYLONATE DEHYDRATASE"/>
    <property type="match status" value="1"/>
</dbReference>
<dbReference type="PANTHER" id="PTHR43661:SF3">
    <property type="entry name" value="D-XYLONATE DEHYDRATASE YAGF-RELATED"/>
    <property type="match status" value="1"/>
</dbReference>
<dbReference type="Pfam" id="PF24877">
    <property type="entry name" value="ILV_EDD_C"/>
    <property type="match status" value="1"/>
</dbReference>
<dbReference type="Pfam" id="PF00920">
    <property type="entry name" value="ILVD_EDD_N"/>
    <property type="match status" value="1"/>
</dbReference>
<dbReference type="SUPFAM" id="SSF143975">
    <property type="entry name" value="IlvD/EDD N-terminal domain-like"/>
    <property type="match status" value="1"/>
</dbReference>
<dbReference type="SUPFAM" id="SSF52016">
    <property type="entry name" value="LeuD/IlvD-like"/>
    <property type="match status" value="1"/>
</dbReference>
<dbReference type="PROSITE" id="PS00886">
    <property type="entry name" value="ILVD_EDD_1"/>
    <property type="match status" value="1"/>
</dbReference>
<dbReference type="PROSITE" id="PS00887">
    <property type="entry name" value="ILVD_EDD_2"/>
    <property type="match status" value="1"/>
</dbReference>
<reference key="1">
    <citation type="submission" date="2006-10" db="EMBL/GenBank/DDBJ databases">
        <title>Complete sequence of Methanosaeta thermophila PT.</title>
        <authorList>
            <consortium name="US DOE Joint Genome Institute"/>
            <person name="Copeland A."/>
            <person name="Lucas S."/>
            <person name="Lapidus A."/>
            <person name="Barry K."/>
            <person name="Detter J.C."/>
            <person name="Glavina del Rio T."/>
            <person name="Hammon N."/>
            <person name="Israni S."/>
            <person name="Pitluck S."/>
            <person name="Chain P."/>
            <person name="Malfatti S."/>
            <person name="Shin M."/>
            <person name="Vergez L."/>
            <person name="Schmutz J."/>
            <person name="Larimer F."/>
            <person name="Land M."/>
            <person name="Hauser L."/>
            <person name="Kyrpides N."/>
            <person name="Kim E."/>
            <person name="Smith K.S."/>
            <person name="Ingram-Smith C."/>
            <person name="Richardson P."/>
        </authorList>
    </citation>
    <scope>NUCLEOTIDE SEQUENCE [LARGE SCALE GENOMIC DNA]</scope>
    <source>
        <strain>DSM 6194 / JCM 14653 / NBRC 101360 / PT</strain>
    </source>
</reference>
<name>ILVD_METTP</name>
<evidence type="ECO:0000255" key="1">
    <source>
        <dbReference type="HAMAP-Rule" id="MF_00012"/>
    </source>
</evidence>
<proteinExistence type="inferred from homology"/>
<accession>A0B6Y9</accession>